<name>RL23_BAUCH</name>
<accession>Q1LTD6</accession>
<proteinExistence type="inferred from homology"/>
<keyword id="KW-1185">Reference proteome</keyword>
<keyword id="KW-0687">Ribonucleoprotein</keyword>
<keyword id="KW-0689">Ribosomal protein</keyword>
<keyword id="KW-0694">RNA-binding</keyword>
<keyword id="KW-0699">rRNA-binding</keyword>
<comment type="function">
    <text evidence="1">One of the early assembly proteins it binds 23S rRNA. One of the proteins that surrounds the polypeptide exit tunnel on the outside of the ribosome. Forms the main docking site for trigger factor binding to the ribosome.</text>
</comment>
<comment type="subunit">
    <text evidence="1">Part of the 50S ribosomal subunit. Contacts protein L29, and trigger factor when it is bound to the ribosome.</text>
</comment>
<comment type="similarity">
    <text evidence="1">Belongs to the universal ribosomal protein uL23 family.</text>
</comment>
<protein>
    <recommendedName>
        <fullName evidence="1">Large ribosomal subunit protein uL23</fullName>
    </recommendedName>
    <alternativeName>
        <fullName evidence="2">50S ribosomal protein L23</fullName>
    </alternativeName>
</protein>
<sequence>MIYDNRLLKVICAPHVSEKTSAVMEKNNILVLKVDKKATKAAIKQAILQLFEVKVKEIHTIIVKGKTKRHGKRIGFRSNWKKAYITLYEGQNFTLINGAK</sequence>
<organism>
    <name type="scientific">Baumannia cicadellinicola subsp. Homalodisca coagulata</name>
    <dbReference type="NCBI Taxonomy" id="374463"/>
    <lineage>
        <taxon>Bacteria</taxon>
        <taxon>Pseudomonadati</taxon>
        <taxon>Pseudomonadota</taxon>
        <taxon>Gammaproteobacteria</taxon>
        <taxon>Candidatus Palibaumannia</taxon>
    </lineage>
</organism>
<reference key="1">
    <citation type="journal article" date="2006" name="PLoS Biol.">
        <title>Metabolic complementarity and genomics of the dual bacterial symbiosis of sharpshooters.</title>
        <authorList>
            <person name="Wu D."/>
            <person name="Daugherty S.C."/>
            <person name="Van Aken S.E."/>
            <person name="Pai G.H."/>
            <person name="Watkins K.L."/>
            <person name="Khouri H."/>
            <person name="Tallon L.J."/>
            <person name="Zaborsky J.M."/>
            <person name="Dunbar H.E."/>
            <person name="Tran P.L."/>
            <person name="Moran N.A."/>
            <person name="Eisen J.A."/>
        </authorList>
    </citation>
    <scope>NUCLEOTIDE SEQUENCE [LARGE SCALE GENOMIC DNA]</scope>
</reference>
<evidence type="ECO:0000255" key="1">
    <source>
        <dbReference type="HAMAP-Rule" id="MF_01369"/>
    </source>
</evidence>
<evidence type="ECO:0000305" key="2"/>
<feature type="chain" id="PRO_0000272706" description="Large ribosomal subunit protein uL23">
    <location>
        <begin position="1"/>
        <end position="100"/>
    </location>
</feature>
<dbReference type="EMBL" id="CP000238">
    <property type="protein sequence ID" value="ABF13954.1"/>
    <property type="molecule type" value="Genomic_DNA"/>
</dbReference>
<dbReference type="RefSeq" id="WP_011520511.1">
    <property type="nucleotide sequence ID" value="NC_007984.1"/>
</dbReference>
<dbReference type="SMR" id="Q1LTD6"/>
<dbReference type="STRING" id="374463.BCI_0330"/>
<dbReference type="KEGG" id="bci:BCI_0330"/>
<dbReference type="HOGENOM" id="CLU_037562_3_1_6"/>
<dbReference type="OrthoDB" id="9793353at2"/>
<dbReference type="Proteomes" id="UP000002427">
    <property type="component" value="Chromosome"/>
</dbReference>
<dbReference type="GO" id="GO:1990904">
    <property type="term" value="C:ribonucleoprotein complex"/>
    <property type="evidence" value="ECO:0007669"/>
    <property type="project" value="UniProtKB-KW"/>
</dbReference>
<dbReference type="GO" id="GO:0005840">
    <property type="term" value="C:ribosome"/>
    <property type="evidence" value="ECO:0007669"/>
    <property type="project" value="UniProtKB-KW"/>
</dbReference>
<dbReference type="GO" id="GO:0019843">
    <property type="term" value="F:rRNA binding"/>
    <property type="evidence" value="ECO:0007669"/>
    <property type="project" value="UniProtKB-UniRule"/>
</dbReference>
<dbReference type="GO" id="GO:0003735">
    <property type="term" value="F:structural constituent of ribosome"/>
    <property type="evidence" value="ECO:0007669"/>
    <property type="project" value="InterPro"/>
</dbReference>
<dbReference type="GO" id="GO:0006412">
    <property type="term" value="P:translation"/>
    <property type="evidence" value="ECO:0007669"/>
    <property type="project" value="UniProtKB-UniRule"/>
</dbReference>
<dbReference type="FunFam" id="3.30.70.330:FF:000001">
    <property type="entry name" value="50S ribosomal protein L23"/>
    <property type="match status" value="1"/>
</dbReference>
<dbReference type="Gene3D" id="3.30.70.330">
    <property type="match status" value="1"/>
</dbReference>
<dbReference type="HAMAP" id="MF_01369_B">
    <property type="entry name" value="Ribosomal_uL23_B"/>
    <property type="match status" value="1"/>
</dbReference>
<dbReference type="InterPro" id="IPR012677">
    <property type="entry name" value="Nucleotide-bd_a/b_plait_sf"/>
</dbReference>
<dbReference type="InterPro" id="IPR013025">
    <property type="entry name" value="Ribosomal_uL23-like"/>
</dbReference>
<dbReference type="InterPro" id="IPR012678">
    <property type="entry name" value="Ribosomal_uL23/eL15/eS24_sf"/>
</dbReference>
<dbReference type="NCBIfam" id="NF004358">
    <property type="entry name" value="PRK05738.1-1"/>
    <property type="match status" value="1"/>
</dbReference>
<dbReference type="NCBIfam" id="NF004359">
    <property type="entry name" value="PRK05738.1-3"/>
    <property type="match status" value="1"/>
</dbReference>
<dbReference type="NCBIfam" id="NF004363">
    <property type="entry name" value="PRK05738.2-4"/>
    <property type="match status" value="1"/>
</dbReference>
<dbReference type="PANTHER" id="PTHR11620">
    <property type="entry name" value="60S RIBOSOMAL PROTEIN L23A"/>
    <property type="match status" value="1"/>
</dbReference>
<dbReference type="Pfam" id="PF00276">
    <property type="entry name" value="Ribosomal_L23"/>
    <property type="match status" value="1"/>
</dbReference>
<dbReference type="SUPFAM" id="SSF54189">
    <property type="entry name" value="Ribosomal proteins S24e, L23 and L15e"/>
    <property type="match status" value="1"/>
</dbReference>
<gene>
    <name evidence="1" type="primary">rplW</name>
    <name type="ordered locus">BCI_0330</name>
</gene>